<dbReference type="EMBL" id="AB052837">
    <property type="protein sequence ID" value="BAB55663.1"/>
    <property type="molecule type" value="mRNA"/>
</dbReference>
<dbReference type="EMBL" id="AB008372">
    <property type="protein sequence ID" value="BAA33379.1"/>
    <property type="molecule type" value="mRNA"/>
</dbReference>
<dbReference type="SMR" id="O93484"/>
<dbReference type="Allergome" id="8977">
    <property type="allergen name" value="Onc m alpha2I"/>
</dbReference>
<dbReference type="GlyCosmos" id="O93484">
    <property type="glycosylation" value="2 sites, No reported glycans"/>
</dbReference>
<dbReference type="KEGG" id="omy:100135811"/>
<dbReference type="OrthoDB" id="8939548at2759"/>
<dbReference type="Proteomes" id="UP000694395">
    <property type="component" value="Unplaced"/>
</dbReference>
<dbReference type="GO" id="GO:0005581">
    <property type="term" value="C:collagen trimer"/>
    <property type="evidence" value="ECO:0007669"/>
    <property type="project" value="UniProtKB-KW"/>
</dbReference>
<dbReference type="GO" id="GO:0005576">
    <property type="term" value="C:extracellular region"/>
    <property type="evidence" value="ECO:0007669"/>
    <property type="project" value="UniProtKB-KW"/>
</dbReference>
<dbReference type="GO" id="GO:0005201">
    <property type="term" value="F:extracellular matrix structural constituent"/>
    <property type="evidence" value="ECO:0007669"/>
    <property type="project" value="InterPro"/>
</dbReference>
<dbReference type="GO" id="GO:0046872">
    <property type="term" value="F:metal ion binding"/>
    <property type="evidence" value="ECO:0007669"/>
    <property type="project" value="UniProtKB-KW"/>
</dbReference>
<dbReference type="FunFam" id="2.60.120.1000:FF:000001">
    <property type="entry name" value="Collagen alpha-1 type I chain"/>
    <property type="match status" value="1"/>
</dbReference>
<dbReference type="Gene3D" id="2.60.120.1000">
    <property type="match status" value="1"/>
</dbReference>
<dbReference type="InterPro" id="IPR008160">
    <property type="entry name" value="Collagen"/>
</dbReference>
<dbReference type="InterPro" id="IPR050938">
    <property type="entry name" value="Collagen_Structural_Proteins"/>
</dbReference>
<dbReference type="InterPro" id="IPR000885">
    <property type="entry name" value="Fib_collagen_C"/>
</dbReference>
<dbReference type="PANTHER" id="PTHR37456:SF6">
    <property type="entry name" value="COLLAGEN ALPHA-1(XXIII) CHAIN-LIKE ISOFORM X2"/>
    <property type="match status" value="1"/>
</dbReference>
<dbReference type="PANTHER" id="PTHR37456">
    <property type="entry name" value="SI:CH211-266K2.1"/>
    <property type="match status" value="1"/>
</dbReference>
<dbReference type="Pfam" id="PF01410">
    <property type="entry name" value="COLFI"/>
    <property type="match status" value="1"/>
</dbReference>
<dbReference type="Pfam" id="PF01391">
    <property type="entry name" value="Collagen"/>
    <property type="match status" value="4"/>
</dbReference>
<dbReference type="SMART" id="SM00038">
    <property type="entry name" value="COLFI"/>
    <property type="match status" value="1"/>
</dbReference>
<dbReference type="PROSITE" id="PS51461">
    <property type="entry name" value="NC1_FIB"/>
    <property type="match status" value="1"/>
</dbReference>
<accession>O93484</accession>
<protein>
    <recommendedName>
        <fullName>Collagen alpha-2(I) chain</fullName>
    </recommendedName>
    <alternativeName>
        <fullName>Alpha-2 type I collagen</fullName>
    </alternativeName>
</protein>
<keyword id="KW-0106">Calcium</keyword>
<keyword id="KW-0176">Collagen</keyword>
<keyword id="KW-1015">Disulfide bond</keyword>
<keyword id="KW-0272">Extracellular matrix</keyword>
<keyword id="KW-0325">Glycoprotein</keyword>
<keyword id="KW-0379">Hydroxylation</keyword>
<keyword id="KW-0479">Metal-binding</keyword>
<keyword id="KW-0873">Pyrrolidone carboxylic acid</keyword>
<keyword id="KW-0677">Repeat</keyword>
<keyword id="KW-0964">Secreted</keyword>
<keyword id="KW-0732">Signal</keyword>
<proteinExistence type="evidence at transcript level"/>
<organism>
    <name type="scientific">Oncorhynchus mykiss</name>
    <name type="common">Rainbow trout</name>
    <name type="synonym">Salmo gairdneri</name>
    <dbReference type="NCBI Taxonomy" id="8022"/>
    <lineage>
        <taxon>Eukaryota</taxon>
        <taxon>Metazoa</taxon>
        <taxon>Chordata</taxon>
        <taxon>Craniata</taxon>
        <taxon>Vertebrata</taxon>
        <taxon>Euteleostomi</taxon>
        <taxon>Actinopterygii</taxon>
        <taxon>Neopterygii</taxon>
        <taxon>Teleostei</taxon>
        <taxon>Protacanthopterygii</taxon>
        <taxon>Salmoniformes</taxon>
        <taxon>Salmonidae</taxon>
        <taxon>Salmoninae</taxon>
        <taxon>Oncorhynchus</taxon>
    </lineage>
</organism>
<comment type="function">
    <text>Type I collagen is a member of group I collagen (fibrillar forming collagen).</text>
</comment>
<comment type="subunit">
    <text>Trimers of one alpha 2(I) and two alpha 1(I) chains.</text>
</comment>
<comment type="subcellular location">
    <subcellularLocation>
        <location evidence="5">Secreted</location>
        <location evidence="5">Extracellular space</location>
        <location evidence="5">Extracellular matrix</location>
    </subcellularLocation>
</comment>
<comment type="tissue specificity">
    <text>Forms the fibrils of tendon, ligaments and bones. In bones the fibrils are mineralized with calcium hydroxyapatite.</text>
</comment>
<comment type="domain">
    <text evidence="1">The C-terminal propeptide, also known as COLFI domain, have crucial roles in tissue growth and repair by controlling both the intracellular assembly of procollagen molecules and the extracellular assembly of collagen fibrils. It binds a calcium ion which is essential for its function.</text>
</comment>
<comment type="PTM">
    <text>Prolines at the third position of the tripeptide repeating unit (G-X-Y) are hydroxylated in some or all of the chains.</text>
</comment>
<comment type="similarity">
    <text evidence="5">Belongs to the fibrillar collagen family.</text>
</comment>
<evidence type="ECO:0000250" key="1"/>
<evidence type="ECO:0000250" key="2">
    <source>
        <dbReference type="UniProtKB" id="P08123"/>
    </source>
</evidence>
<evidence type="ECO:0000250" key="3">
    <source>
        <dbReference type="UniProtKB" id="Q03692"/>
    </source>
</evidence>
<evidence type="ECO:0000255" key="4"/>
<evidence type="ECO:0000255" key="5">
    <source>
        <dbReference type="PROSITE-ProRule" id="PRU00793"/>
    </source>
</evidence>
<evidence type="ECO:0000256" key="6">
    <source>
        <dbReference type="SAM" id="MobiDB-lite"/>
    </source>
</evidence>
<gene>
    <name type="primary">col1a2</name>
</gene>
<feature type="signal peptide" evidence="2">
    <location>
        <begin position="1"/>
        <end position="22"/>
    </location>
</feature>
<feature type="propeptide" id="PRO_0000005821" description="N-terminal propeptide" evidence="2">
    <location>
        <begin position="23"/>
        <end position="72"/>
    </location>
</feature>
<feature type="chain" id="PRO_0000005822" description="Collagen alpha-2(I) chain" evidence="2">
    <location>
        <begin position="73"/>
        <end position="1113"/>
    </location>
</feature>
<feature type="propeptide" id="PRO_0000005823" description="C-terminal propeptide" evidence="2">
    <location>
        <begin position="1114"/>
        <end position="1356"/>
    </location>
</feature>
<feature type="domain" description="Fibrillar collagen NC1" evidence="5">
    <location>
        <begin position="1123"/>
        <end position="1356"/>
    </location>
</feature>
<feature type="region of interest" description="Disordered" evidence="6">
    <location>
        <begin position="22"/>
        <end position="1112"/>
    </location>
</feature>
<feature type="compositionally biased region" description="Gly residues" evidence="6">
    <location>
        <begin position="76"/>
        <end position="88"/>
    </location>
</feature>
<feature type="compositionally biased region" description="Low complexity" evidence="6">
    <location>
        <begin position="219"/>
        <end position="248"/>
    </location>
</feature>
<feature type="compositionally biased region" description="Gly residues" evidence="6">
    <location>
        <begin position="259"/>
        <end position="280"/>
    </location>
</feature>
<feature type="compositionally biased region" description="Low complexity" evidence="6">
    <location>
        <begin position="281"/>
        <end position="315"/>
    </location>
</feature>
<feature type="compositionally biased region" description="Pro residues" evidence="6">
    <location>
        <begin position="317"/>
        <end position="327"/>
    </location>
</feature>
<feature type="compositionally biased region" description="Gly residues" evidence="6">
    <location>
        <begin position="334"/>
        <end position="343"/>
    </location>
</feature>
<feature type="compositionally biased region" description="Gly residues" evidence="6">
    <location>
        <begin position="391"/>
        <end position="412"/>
    </location>
</feature>
<feature type="compositionally biased region" description="Gly residues" evidence="6">
    <location>
        <begin position="418"/>
        <end position="427"/>
    </location>
</feature>
<feature type="compositionally biased region" description="Gly residues" evidence="6">
    <location>
        <begin position="448"/>
        <end position="457"/>
    </location>
</feature>
<feature type="compositionally biased region" description="Low complexity" evidence="6">
    <location>
        <begin position="479"/>
        <end position="489"/>
    </location>
</feature>
<feature type="compositionally biased region" description="Gly residues" evidence="6">
    <location>
        <begin position="511"/>
        <end position="520"/>
    </location>
</feature>
<feature type="compositionally biased region" description="Low complexity" evidence="6">
    <location>
        <begin position="521"/>
        <end position="564"/>
    </location>
</feature>
<feature type="compositionally biased region" description="Low complexity" evidence="6">
    <location>
        <begin position="587"/>
        <end position="603"/>
    </location>
</feature>
<feature type="compositionally biased region" description="Gly residues" evidence="6">
    <location>
        <begin position="610"/>
        <end position="619"/>
    </location>
</feature>
<feature type="compositionally biased region" description="Gly residues" evidence="6">
    <location>
        <begin position="628"/>
        <end position="646"/>
    </location>
</feature>
<feature type="compositionally biased region" description="Basic and acidic residues" evidence="6">
    <location>
        <begin position="648"/>
        <end position="659"/>
    </location>
</feature>
<feature type="compositionally biased region" description="Low complexity" evidence="6">
    <location>
        <begin position="716"/>
        <end position="731"/>
    </location>
</feature>
<feature type="compositionally biased region" description="Gly residues" evidence="6">
    <location>
        <begin position="736"/>
        <end position="745"/>
    </location>
</feature>
<feature type="compositionally biased region" description="Low complexity" evidence="6">
    <location>
        <begin position="746"/>
        <end position="764"/>
    </location>
</feature>
<feature type="compositionally biased region" description="Low complexity" evidence="6">
    <location>
        <begin position="776"/>
        <end position="786"/>
    </location>
</feature>
<feature type="compositionally biased region" description="Gly residues" evidence="6">
    <location>
        <begin position="787"/>
        <end position="796"/>
    </location>
</feature>
<feature type="compositionally biased region" description="Low complexity" evidence="6">
    <location>
        <begin position="797"/>
        <end position="809"/>
    </location>
</feature>
<feature type="compositionally biased region" description="Gly residues" evidence="6">
    <location>
        <begin position="817"/>
        <end position="826"/>
    </location>
</feature>
<feature type="compositionally biased region" description="Low complexity" evidence="6">
    <location>
        <begin position="827"/>
        <end position="858"/>
    </location>
</feature>
<feature type="compositionally biased region" description="Gly residues" evidence="6">
    <location>
        <begin position="877"/>
        <end position="886"/>
    </location>
</feature>
<feature type="compositionally biased region" description="Low complexity" evidence="6">
    <location>
        <begin position="888"/>
        <end position="903"/>
    </location>
</feature>
<feature type="compositionally biased region" description="Gly residues" evidence="6">
    <location>
        <begin position="976"/>
        <end position="985"/>
    </location>
</feature>
<feature type="compositionally biased region" description="Basic and acidic residues" evidence="6">
    <location>
        <begin position="999"/>
        <end position="1013"/>
    </location>
</feature>
<feature type="compositionally biased region" description="Pro residues" evidence="6">
    <location>
        <begin position="1083"/>
        <end position="1095"/>
    </location>
</feature>
<feature type="binding site" evidence="3">
    <location>
        <position position="1171"/>
    </location>
    <ligand>
        <name>Ca(2+)</name>
        <dbReference type="ChEBI" id="CHEBI:29108"/>
    </ligand>
</feature>
<feature type="binding site" evidence="3">
    <location>
        <position position="1173"/>
    </location>
    <ligand>
        <name>Ca(2+)</name>
        <dbReference type="ChEBI" id="CHEBI:29108"/>
    </ligand>
</feature>
<feature type="binding site" evidence="3">
    <location>
        <position position="1174"/>
    </location>
    <ligand>
        <name>Ca(2+)</name>
        <dbReference type="ChEBI" id="CHEBI:29108"/>
    </ligand>
</feature>
<feature type="binding site" evidence="3">
    <location>
        <position position="1176"/>
    </location>
    <ligand>
        <name>Ca(2+)</name>
        <dbReference type="ChEBI" id="CHEBI:29108"/>
    </ligand>
</feature>
<feature type="binding site" evidence="3">
    <location>
        <position position="1179"/>
    </location>
    <ligand>
        <name>Ca(2+)</name>
        <dbReference type="ChEBI" id="CHEBI:29108"/>
    </ligand>
</feature>
<feature type="modified residue" description="Pyrrolidone carboxylic acid" evidence="2">
    <location>
        <position position="23"/>
    </location>
</feature>
<feature type="modified residue" description="Pyrrolidone carboxylic acid" evidence="2">
    <location>
        <position position="73"/>
    </location>
</feature>
<feature type="modified residue" description="Allysine" evidence="2">
    <location>
        <position position="78"/>
    </location>
</feature>
<feature type="modified residue" description="5-hydroxylysine; alternate" evidence="2">
    <location>
        <position position="171"/>
    </location>
</feature>
<feature type="glycosylation site" description="O-linked (Gal...) hydroxylysine; alternate" evidence="2">
    <location>
        <position position="171"/>
    </location>
</feature>
<feature type="glycosylation site" description="N-linked (GlcNAc...) asparagine" evidence="4">
    <location>
        <position position="1257"/>
    </location>
</feature>
<feature type="disulfide bond" evidence="5">
    <location>
        <begin position="1153"/>
        <end position="1185"/>
    </location>
</feature>
<feature type="disulfide bond" evidence="5">
    <location>
        <begin position="1193"/>
        <end position="1354"/>
    </location>
</feature>
<feature type="disulfide bond" evidence="5">
    <location>
        <begin position="1262"/>
        <end position="1307"/>
    </location>
</feature>
<reference key="1">
    <citation type="journal article" date="2001" name="Eur. J. Biochem.">
        <title>Complete primary structure of rainbow trout type I collagen consisting of alpha1(I)alpha2(I)alpha3(I) heterotrimers.</title>
        <authorList>
            <person name="Saito M."/>
            <person name="Takenouchi Y."/>
            <person name="Kunisaki N."/>
            <person name="Kimura S."/>
        </authorList>
    </citation>
    <scope>NUCLEOTIDE SEQUENCE [MRNA]</scope>
</reference>
<reference key="2">
    <citation type="journal article" date="1998" name="Fish. Sci.">
        <title>Partial characterization of cDNA clones encoding the three distinct pro alpha chains of type I collagen from rainbow trout.</title>
        <authorList>
            <person name="Saito M."/>
            <person name="Kunisaki N."/>
            <person name="Hirono I."/>
            <person name="Aoki T."/>
            <person name="Ishida M."/>
            <person name="Urano N."/>
            <person name="Kimura S."/>
        </authorList>
    </citation>
    <scope>NUCLEOTIDE SEQUENCE [MRNA] OF 417-1356</scope>
    <source>
        <tissue>Fibroblast</tissue>
    </source>
</reference>
<name>CO1A2_ONCMY</name>
<sequence>MLSFVDNRILLLLAVTSLLASCQSGGLKGPRGAKGPRGDRGPQGPNGRDGKAGLPGIAGPPGPPGLGGNFAAQFDGGKGSDPGPGPMGLMGSRGPNGPPGAPGPQGFTGHAGEPGEPGQTGSIGARGPTGSAGKPGEDGNNGRPGKPGDRGGPGTQGARGFPGTPGLPGMKGHRGYNGLDGRKGESGTAGAKGETGAHGANGSPGPAGSRGLNGERGRAGPAGPAGARGADGSTGPAGPAGPLGAAGPPGFPGAPGPKGEIGGAGSNGPSGPQGGRGEPGINGAVGPVGPVGNPGNNGINGAKGAAGLPGVAGAPGFPGPRGGPGPQGPQGSTGARGLGGDPGPSGQKGDSGAKGEPGHSGVQGAAGPAGEEGKRGSTGEVGATGPAGLRGARGGAGTRGLPGLEGRGGPIGMPGARGATGPGGIRGAPGDAGRAGESGLTGARGLPGNSGQGGPPGKEGPPGAAGLDGRTGPPGPTGPRGQPGNIGFPGPKGPGGEAGKGGDKGPTGATGLRGGPGADGNNGAPGPAGVVGNTGEKGEQGPAGAPGFQGLPGPAGPAGEAGKAGNQGMPGDQGLPGPAGVKGERGNSGPAGSAGSQGAIGARGPAGTPGPDGGKGEPGSVGIVGAAGHQGPGGMPGERGAGGTPGPKGEKGEGGHRGLEGNMGRDGARGGPGPSGPPGPSGANGEKGESGSFGPAGPAGLRGPSGERGEGGPAGLPGFAGPPGSDGQSGPRGEKGPAGGKGDVGPAGPAGPSGQSGPSGASGPAGPPGGRGDAGPSGLTGFPGAAGRVGGPGPAGIAGPPGSAGPAGKDGPRGLRGDPGPGGPQGEQGVVGPAGISGDKGPSGESGPPGAPGTAGPQGVLGPSGFVGLPGSRGDKGLPGGPGAVGEPGRLGPAGASGPRGPAGNIGMPGMTGTQGEAGREGNSGNDGPPGRPGAAGFKGDRGEPGSPGALGSSGQPGPNGPAGSAGRPGNRGESGPTGNGGPVGAVGARGAPGPAGPRGEKGGAGEKGDRGMKGLRGHGGLQGMPGPNGPSGETGSAGITGPAGPRGPAGPHGPPGKDGRAGGHGAIGPVGHRGSPGHLGPAGPPGSPGLPGPAGPAGGGYDQSGGYDEYRADQPSFRAKDYEVDATIKSLNSQIENLLTPEGSKKNPARTCRDIRLSHPDWSSGFYWIDPNQGCIADAIKAYCDFSTGHTCIHPHPESIARKNWYRSSENKKHVWFGETINGGTEFAYNDETLSPQSMATQLAFMRLLANQATQNITYHCKNSVAYMDGENGNLKKAVLLQGSNDVELRAEGNSRFTFNVLEDGCTRHTGQWSKTVIEYRTNKPSRLPILDIAPLDIGEADQEFGLDIGPVCFK</sequence>